<feature type="chain" id="PRO_0000455544" description="GDP-fucose protein O-fucosyltransferase 2">
    <location>
        <begin position="1"/>
        <end position="858"/>
    </location>
</feature>
<feature type="topological domain" description="Cytoplasmic" evidence="7">
    <location>
        <begin position="1"/>
        <end position="150"/>
    </location>
</feature>
<feature type="transmembrane region" description="Helical; Signal-anchor for type II membrane protein" evidence="2">
    <location>
        <begin position="151"/>
        <end position="171"/>
    </location>
</feature>
<feature type="topological domain" description="Lumenal" evidence="7">
    <location>
        <begin position="172"/>
        <end position="858"/>
    </location>
</feature>
<feature type="region of interest" description="Disordered" evidence="3">
    <location>
        <begin position="448"/>
        <end position="510"/>
    </location>
</feature>
<feature type="region of interest" description="Disordered" evidence="3">
    <location>
        <begin position="819"/>
        <end position="858"/>
    </location>
</feature>
<feature type="compositionally biased region" description="Basic and acidic residues" evidence="3">
    <location>
        <begin position="486"/>
        <end position="510"/>
    </location>
</feature>
<feature type="compositionally biased region" description="Basic and acidic residues" evidence="3">
    <location>
        <begin position="831"/>
        <end position="846"/>
    </location>
</feature>
<feature type="active site" description="Proton acceptor" evidence="1">
    <location>
        <position position="238"/>
    </location>
</feature>
<feature type="binding site" evidence="1">
    <location>
        <begin position="237"/>
        <end position="241"/>
    </location>
    <ligand>
        <name>GDP-beta-L-fucose</name>
        <dbReference type="ChEBI" id="CHEBI:57273"/>
    </ligand>
</feature>
<feature type="binding site" evidence="1">
    <location>
        <begin position="646"/>
        <end position="648"/>
    </location>
    <ligand>
        <name>GDP-beta-L-fucose</name>
        <dbReference type="ChEBI" id="CHEBI:57273"/>
    </ligand>
</feature>
<feature type="binding site" evidence="1">
    <location>
        <begin position="787"/>
        <end position="788"/>
    </location>
    <ligand>
        <name>GDP-beta-L-fucose</name>
        <dbReference type="ChEBI" id="CHEBI:57273"/>
    </ligand>
</feature>
<feature type="site" description="Essential for catalytic activity" evidence="1">
    <location>
        <position position="795"/>
    </location>
</feature>
<proteinExistence type="evidence at protein level"/>
<reference evidence="11" key="1">
    <citation type="submission" date="2013-05" db="EMBL/GenBank/DDBJ databases">
        <authorList>
            <person name="Sibley D."/>
            <person name="Venepally P."/>
            <person name="Karamycheva S."/>
            <person name="Hadjithomas M."/>
            <person name="Khan A."/>
            <person name="Brunk B."/>
            <person name="Roos D."/>
            <person name="Caler E."/>
            <person name="Lorenzi H."/>
        </authorList>
    </citation>
    <scope>NUCLEOTIDE SEQUENCE [LARGE SCALE GENOMIC DNA]</scope>
    <source>
        <strain evidence="11">ATCC 50853 / GT1</strain>
    </source>
</reference>
<reference evidence="7" key="2">
    <citation type="journal article" date="2019" name="J. Biol. Chem.">
        <title>Protein O-fucosyltransferase 2-mediated O-glycosylation of the adhesin MIC2 is dispensable for Toxoplasma gondii tachyzoite infection.</title>
        <authorList>
            <person name="Khurana S."/>
            <person name="Coffey M.J."/>
            <person name="John A."/>
            <person name="Uboldi A.D."/>
            <person name="Huynh M.H."/>
            <person name="Stewart R.J."/>
            <person name="Carruthers V.B."/>
            <person name="Tonkin C.J."/>
            <person name="Goddard-Borger E.D."/>
            <person name="Scott N.E."/>
        </authorList>
    </citation>
    <scope>FUNCTION</scope>
    <scope>CATALYTIC ACTIVITY</scope>
    <scope>PATHWAY</scope>
    <scope>DISRUPTION PHENOTYPE</scope>
</reference>
<reference evidence="7" key="3">
    <citation type="journal article" date="2019" name="J. Biol. Chem.">
        <title>O-Fucosylation of thrombospondin-like repeats is required for processing of microneme protein 2 and for efficient host cell invasion by Toxoplasma gondii tachyzoites.</title>
        <authorList>
            <person name="Bandini G."/>
            <person name="Leon D.R."/>
            <person name="Hoppe C.M."/>
            <person name="Zhang Y."/>
            <person name="Agop-Nersesian C."/>
            <person name="Shears M.J."/>
            <person name="Mahal L.K."/>
            <person name="Routier F.H."/>
            <person name="Costello C.E."/>
            <person name="Samuelson J."/>
        </authorList>
    </citation>
    <scope>FUNCTION</scope>
    <scope>CATALYTIC ACTIVITY</scope>
    <scope>PATHWAY</scope>
    <scope>SUBCELLULAR LOCATION</scope>
    <scope>DEVELOPMENTAL STAGE</scope>
    <scope>DISRUPTION PHENOTYPE</scope>
</reference>
<gene>
    <name evidence="6" type="primary">POFUT2</name>
    <name evidence="10" type="ORF">TGGT1_273550</name>
</gene>
<sequence>MHCQLGGQARALIFLMFESCRNSWHVSPWSSVPFLPSPCLFFSFSALPFLHPLSQLIACRGSSATWLFPVSSGTLVLRYALAASPPRGTMRPSTNPRTAEEGRPWLIHATQTGPQTASVLSLFPAVNAGFFSACRQHRGGRPPCLLNHRRLLLGLVSVLTVFLSCLPFTNATVSPAALQDVCYAFGNISRKLSSFLVPSRVTCPRGATPLSGVEAQDSLEHPEIPDFRFLVYDVKNGEGFHLQKEVIYRVALVISLLNARSAQQGRMTDVHTAEKAREDRGHPQASHMLCASSSFSHACSARSTFPFFPMWVLVLPPWCRLAHWHFSEETITAMAENSWLKHVRWGTFFDFQDLGERLPVMEYEDFLTYQLMRPDPWGERRQRKEKQTTPVELDVVLSVRFSSTPSSRSLPFCACLSSRASEIADEQAQRDDVCCNVNDLPGCPQIHAALTPQERQRAPAQRGGDPREEIDEQTGEFNEGHNPSGDGEREKRKPGRRSDTSRSRKEIQEEAKVSDTWSGVSLWLAGFCETVRALEMWCASLYIADAPRIADLLWRSVAERPPGAIQTVWLKFGENLLVPWPDVLLDAHLLDMLHVHPKLRQIGDLFINKFLSNRDKTETGKGERASTEGGTEGDENLAKHGYIAAHLRRTDFLYLKRSVPLQRAAAYLVSRMKEHGVFKAFICTDGSEDEKRELRDAVRRVGDAASSSPYTVVFFDLPTVRRLMIKTLEASSHVSDDGSFHDLKAVETPGYSGPNHISLLLHPGITALIEVWIAARAAYFIGTKDSRFSQAIRWERHLMGHPLDSSLEVFCVDSSPDQTGGQAQGKCFATKSHDPPEGRSRSELRRKYWPSLDPSSTL</sequence>
<keyword id="KW-0119">Carbohydrate metabolism</keyword>
<keyword id="KW-0256">Endoplasmic reticulum</keyword>
<keyword id="KW-0294">Fucose metabolism</keyword>
<keyword id="KW-0328">Glycosyltransferase</keyword>
<keyword id="KW-0472">Membrane</keyword>
<keyword id="KW-0735">Signal-anchor</keyword>
<keyword id="KW-0808">Transferase</keyword>
<keyword id="KW-0812">Transmembrane</keyword>
<keyword id="KW-1133">Transmembrane helix</keyword>
<accession>S7WCF5</accession>
<protein>
    <recommendedName>
        <fullName evidence="7">GDP-fucose protein O-fucosyltransferase 2</fullName>
        <ecNumber evidence="8 9">2.4.1.221</ecNumber>
    </recommendedName>
    <alternativeName>
        <fullName evidence="6">Protein O-fucosyltransferase 2</fullName>
    </alternativeName>
</protein>
<evidence type="ECO:0000250" key="1">
    <source>
        <dbReference type="UniProtKB" id="Q9Y2G5"/>
    </source>
</evidence>
<evidence type="ECO:0000255" key="2"/>
<evidence type="ECO:0000256" key="3">
    <source>
        <dbReference type="SAM" id="MobiDB-lite"/>
    </source>
</evidence>
<evidence type="ECO:0000269" key="4">
    <source>
    </source>
</evidence>
<evidence type="ECO:0000269" key="5">
    <source>
    </source>
</evidence>
<evidence type="ECO:0000303" key="6">
    <source>
    </source>
</evidence>
<evidence type="ECO:0000305" key="7"/>
<evidence type="ECO:0000305" key="8">
    <source>
    </source>
</evidence>
<evidence type="ECO:0000305" key="9">
    <source>
    </source>
</evidence>
<evidence type="ECO:0000312" key="10">
    <source>
        <dbReference type="EMBL" id="EPR64539.1"/>
    </source>
</evidence>
<evidence type="ECO:0000312" key="11">
    <source>
        <dbReference type="Proteomes" id="UP000005641"/>
    </source>
</evidence>
<name>OFUT2_TOXGG</name>
<organism evidence="11">
    <name type="scientific">Toxoplasma gondii (strain ATCC 50853 / GT1)</name>
    <dbReference type="NCBI Taxonomy" id="507601"/>
    <lineage>
        <taxon>Eukaryota</taxon>
        <taxon>Sar</taxon>
        <taxon>Alveolata</taxon>
        <taxon>Apicomplexa</taxon>
        <taxon>Conoidasida</taxon>
        <taxon>Coccidia</taxon>
        <taxon>Eucoccidiorida</taxon>
        <taxon>Eimeriorina</taxon>
        <taxon>Sarcocystidae</taxon>
        <taxon>Toxoplasma</taxon>
    </lineage>
</organism>
<dbReference type="EC" id="2.4.1.221" evidence="8 9"/>
<dbReference type="EMBL" id="AAQM03000021">
    <property type="protein sequence ID" value="EPR64539.1"/>
    <property type="molecule type" value="Genomic_DNA"/>
</dbReference>
<dbReference type="EnsemblProtists" id="EPR64539">
    <property type="protein sequence ID" value="EPR64539"/>
    <property type="gene ID" value="TGGT1_273550"/>
</dbReference>
<dbReference type="VEuPathDB" id="ToxoDB:TGGT1_273550"/>
<dbReference type="OrthoDB" id="4952at5809"/>
<dbReference type="BRENDA" id="2.4.1.221">
    <property type="organism ID" value="6411"/>
</dbReference>
<dbReference type="UniPathway" id="UPA00378"/>
<dbReference type="Proteomes" id="UP000005641">
    <property type="component" value="Unassembled WGS sequence"/>
</dbReference>
<dbReference type="GO" id="GO:0005783">
    <property type="term" value="C:endoplasmic reticulum"/>
    <property type="evidence" value="ECO:0000314"/>
    <property type="project" value="UniProtKB"/>
</dbReference>
<dbReference type="GO" id="GO:0005789">
    <property type="term" value="C:endoplasmic reticulum membrane"/>
    <property type="evidence" value="ECO:0007669"/>
    <property type="project" value="UniProtKB-SubCell"/>
</dbReference>
<dbReference type="GO" id="GO:0046922">
    <property type="term" value="F:peptide-O-fucosyltransferase activity"/>
    <property type="evidence" value="ECO:0000315"/>
    <property type="project" value="UniProtKB"/>
</dbReference>
<dbReference type="GO" id="GO:0006004">
    <property type="term" value="P:fucose metabolic process"/>
    <property type="evidence" value="ECO:0007669"/>
    <property type="project" value="UniProtKB-KW"/>
</dbReference>
<dbReference type="GO" id="GO:0036066">
    <property type="term" value="P:protein O-linked fucosylation"/>
    <property type="evidence" value="ECO:0000315"/>
    <property type="project" value="UniProtKB"/>
</dbReference>
<dbReference type="Gene3D" id="3.40.50.11340">
    <property type="match status" value="1"/>
</dbReference>
<dbReference type="Gene3D" id="3.40.50.11350">
    <property type="match status" value="1"/>
</dbReference>
<dbReference type="InterPro" id="IPR019378">
    <property type="entry name" value="GDP-Fuc_O-FucTrfase"/>
</dbReference>
<dbReference type="InterPro" id="IPR045130">
    <property type="entry name" value="OFUT2-like"/>
</dbReference>
<dbReference type="PANTHER" id="PTHR13398">
    <property type="entry name" value="GDP-FUCOSE PROTEIN O-FUCOSYLTRANSFERASE 2"/>
    <property type="match status" value="1"/>
</dbReference>
<dbReference type="PANTHER" id="PTHR13398:SF0">
    <property type="entry name" value="GDP-FUCOSE PROTEIN O-FUCOSYLTRANSFERASE 2"/>
    <property type="match status" value="1"/>
</dbReference>
<dbReference type="Pfam" id="PF10250">
    <property type="entry name" value="O-FucT"/>
    <property type="match status" value="1"/>
</dbReference>
<comment type="function">
    <text evidence="4 5">Catalyzes the reaction that attaches fucose through an O-glycosidic linkage to a conserved serine or threonine residue in the consensus sequence C1-X-X-S/T-C2 of thrombospondin type I repeats (TSRs) where C1 and C2 are the first and second cysteines of the repeat, respectively (PubMed:30514763, PubMed:30538131). O-fucosylates microneme protein MIC2 and may play a role in its stabilization (PubMed:30514763, PubMed:30538131). Probably by regulating protein O-fucosylation, may play a role in tachyzoite adhesion to and/or invasion of host cells; however, POFUT2 involvement in adhesion/invasion is controversial (PubMed:30514763, PubMed:30538131).</text>
</comment>
<comment type="catalytic activity">
    <reaction evidence="8 9">
        <text>L-seryl-[protein] + GDP-beta-L-fucose = 3-O-(alpha-L-fucosyl)-L-seryl-[protein] + GDP + H(+)</text>
        <dbReference type="Rhea" id="RHEA:63644"/>
        <dbReference type="Rhea" id="RHEA-COMP:9863"/>
        <dbReference type="Rhea" id="RHEA-COMP:17914"/>
        <dbReference type="ChEBI" id="CHEBI:15378"/>
        <dbReference type="ChEBI" id="CHEBI:29999"/>
        <dbReference type="ChEBI" id="CHEBI:57273"/>
        <dbReference type="ChEBI" id="CHEBI:58189"/>
        <dbReference type="ChEBI" id="CHEBI:189632"/>
        <dbReference type="EC" id="2.4.1.221"/>
    </reaction>
    <physiologicalReaction direction="left-to-right" evidence="8 9">
        <dbReference type="Rhea" id="RHEA:63645"/>
    </physiologicalReaction>
</comment>
<comment type="catalytic activity">
    <reaction evidence="8 9">
        <text>L-threonyl-[protein] + GDP-beta-L-fucose = 3-O-(alpha-L-fucosyl)-L-threonyl-[protein] + GDP + H(+)</text>
        <dbReference type="Rhea" id="RHEA:70491"/>
        <dbReference type="Rhea" id="RHEA-COMP:11060"/>
        <dbReference type="Rhea" id="RHEA-COMP:17915"/>
        <dbReference type="ChEBI" id="CHEBI:15378"/>
        <dbReference type="ChEBI" id="CHEBI:30013"/>
        <dbReference type="ChEBI" id="CHEBI:57273"/>
        <dbReference type="ChEBI" id="CHEBI:58189"/>
        <dbReference type="ChEBI" id="CHEBI:189631"/>
        <dbReference type="EC" id="2.4.1.221"/>
    </reaction>
    <physiologicalReaction direction="left-to-right" evidence="8 9">
        <dbReference type="Rhea" id="RHEA:70492"/>
    </physiologicalReaction>
</comment>
<comment type="pathway">
    <text evidence="4 5">Protein modification; protein glycosylation.</text>
</comment>
<comment type="subcellular location">
    <subcellularLocation>
        <location evidence="5">Endoplasmic reticulum membrane</location>
        <topology evidence="7">Single-pass type II membrane protein</topology>
    </subcellularLocation>
</comment>
<comment type="developmental stage">
    <text evidence="5">Expressed in tachyzoites (at protein level).</text>
</comment>
<comment type="disruption phenotype">
    <text evidence="4 5">Loss of MIC2 O-fucosylation (PubMed:30514763, PubMed:30538131). Nuclear O-fucosylation is normal (PubMed:30538131). MIC2 protein levels are decreased by 50 percent. Abnormal MIC2 accumulation in the early/mid-secretory pathway (PubMed:30538131). The number of plaques caused by tachyzoite infection of human foreskin fibroblasts (HFF) is reduced by 40 percent (PubMed:30538131). The number of tachyzoites that are attached to or invaded the host HFFs is reduced. Egress from the HFFs is also partially impaired (PubMed:30538131). However, another study shows that loss of POFUT2 only leads to a small decrease in MIC2 protein levels and has no effect on MIC2 trafficking and interaction with M2AP (PubMed:30514763). Also, the number of plaques caused by tachyzoite infection of HFFs is reduced by only 20 percent and tachyzoite adhesion to and invasion of HFFs are normal (PubMed:30514763).</text>
</comment>
<comment type="similarity">
    <text evidence="7">Belongs to the glycosyltransferase 68 family.</text>
</comment>